<feature type="signal peptide" evidence="1">
    <location>
        <begin position="1"/>
        <end position="26"/>
    </location>
</feature>
<feature type="chain" id="PRO_0000014253" description="Uncharacterized protein TP_0690">
    <location>
        <begin position="27"/>
        <end position="193"/>
    </location>
</feature>
<proteinExistence type="inferred from homology"/>
<sequence>MRNVFVGALCMCGMSFVFSDSVRSAAAAYFSHFSWVMPERVVQEHISWRYKALKQDHMEVDCDVYAYRGGRVFPRVSGMGVIDHTNIPHALRIFCEKMTDSFMKKKIDPHLCQRERKFLPHYFSFRMGKLPRICAVVFAQPNVMQGNFLTVHFKLNVENEDSRIIEVTVAKEQENWKLFQFLFKEDRAHLAVL</sequence>
<accession>O83688</accession>
<reference key="1">
    <citation type="journal article" date="1998" name="Science">
        <title>Complete genome sequence of Treponema pallidum, the syphilis spirochete.</title>
        <authorList>
            <person name="Fraser C.M."/>
            <person name="Norris S.J."/>
            <person name="Weinstock G.M."/>
            <person name="White O."/>
            <person name="Sutton G.G."/>
            <person name="Dodson R.J."/>
            <person name="Gwinn M.L."/>
            <person name="Hickey E.K."/>
            <person name="Clayton R.A."/>
            <person name="Ketchum K.A."/>
            <person name="Sodergren E."/>
            <person name="Hardham J.M."/>
            <person name="McLeod M.P."/>
            <person name="Salzberg S.L."/>
            <person name="Peterson J.D."/>
            <person name="Khalak H.G."/>
            <person name="Richardson D.L."/>
            <person name="Howell J.K."/>
            <person name="Chidambaram M."/>
            <person name="Utterback T.R."/>
            <person name="McDonald L.A."/>
            <person name="Artiach P."/>
            <person name="Bowman C."/>
            <person name="Cotton M.D."/>
            <person name="Fujii C."/>
            <person name="Garland S.A."/>
            <person name="Hatch B."/>
            <person name="Horst K."/>
            <person name="Roberts K.M."/>
            <person name="Sandusky M."/>
            <person name="Weidman J.F."/>
            <person name="Smith H.O."/>
            <person name="Venter J.C."/>
        </authorList>
    </citation>
    <scope>NUCLEOTIDE SEQUENCE [LARGE SCALE GENOMIC DNA]</scope>
    <source>
        <strain>Nichols</strain>
    </source>
</reference>
<dbReference type="EMBL" id="AE000520">
    <property type="protein sequence ID" value="AAC65664.1"/>
    <property type="molecule type" value="Genomic_DNA"/>
</dbReference>
<dbReference type="PIR" id="G71292">
    <property type="entry name" value="G71292"/>
</dbReference>
<dbReference type="IntAct" id="O83688">
    <property type="interactions" value="1"/>
</dbReference>
<dbReference type="STRING" id="243276.TP_0690"/>
<dbReference type="EnsemblBacteria" id="AAC65664">
    <property type="protein sequence ID" value="AAC65664"/>
    <property type="gene ID" value="TP_0690"/>
</dbReference>
<dbReference type="KEGG" id="tpa:TP_0690"/>
<dbReference type="KEGG" id="tpw:TPANIC_0690"/>
<dbReference type="eggNOG" id="ENOG5031CXJ">
    <property type="taxonomic scope" value="Bacteria"/>
</dbReference>
<dbReference type="HOGENOM" id="CLU_1229453_0_0_12"/>
<dbReference type="Proteomes" id="UP000000811">
    <property type="component" value="Chromosome"/>
</dbReference>
<organism>
    <name type="scientific">Treponema pallidum (strain Nichols)</name>
    <dbReference type="NCBI Taxonomy" id="243276"/>
    <lineage>
        <taxon>Bacteria</taxon>
        <taxon>Pseudomonadati</taxon>
        <taxon>Spirochaetota</taxon>
        <taxon>Spirochaetia</taxon>
        <taxon>Spirochaetales</taxon>
        <taxon>Treponemataceae</taxon>
        <taxon>Treponema</taxon>
    </lineage>
</organism>
<protein>
    <recommendedName>
        <fullName>Uncharacterized protein TP_0690</fullName>
    </recommendedName>
</protein>
<name>Y690_TREPA</name>
<evidence type="ECO:0000255" key="1"/>
<gene>
    <name type="ordered locus">TP_0690</name>
</gene>
<keyword id="KW-1185">Reference proteome</keyword>
<keyword id="KW-0732">Signal</keyword>